<sequence>MDKRHDPSRRIIAPHGSQLSCKSWLTEAPMRMLMNNLHPDVAERPEDLVVYGGIGRAARDWDCYDKIIEVLKRLEDDETLLVQSGKPVGVFRTHADAPRVLIANSNLVPHWANWEHFNELDKQGLAMYGQMTAGSWIYIGTQGIVQGTYETFVSVAKQHFGGISKGKWILTGGLGGMGGAQTLAGTMAGFSVLACEVDETRIDFRLRTRYVDKKATSLDEALAMIEAANQAGKPVSVGLLANAADVFAELVKRGITPDVVTDQTSAHDPLNGYLPQGWTMAQAADMRKTDEAAVVKAAKASMAVQVQAMLDLQAAGAATLDYGNNIRQMAFETGVKNAFDFPGFVPAYIRPLFCEGIGPFRWVALSGDPEDIYKTDAKVKELIPDNPHLHNWLDMARERIAFQGLPARICWVGLKDRARLAQAFNEMVKNGELSAPIVIGRDHLDSGSVASPNRETESMLDGSDAVSDWPLLNALLNTASGATWVSLHHGGGVGMGFSQHSGVVIVCDGTETAAKRVGRVLWNDPATGVMRHADAGYEIAKNCAKEQGLDLPMLKD</sequence>
<protein>
    <recommendedName>
        <fullName evidence="1">Urocanate hydratase</fullName>
        <shortName evidence="1">Urocanase</shortName>
        <ecNumber evidence="1">4.2.1.49</ecNumber>
    </recommendedName>
    <alternativeName>
        <fullName evidence="1">Imidazolonepropionate hydrolase</fullName>
    </alternativeName>
</protein>
<organism>
    <name type="scientific">Shewanella oneidensis (strain ATCC 700550 / JCM 31522 / CIP 106686 / LMG 19005 / NCIMB 14063 / MR-1)</name>
    <dbReference type="NCBI Taxonomy" id="211586"/>
    <lineage>
        <taxon>Bacteria</taxon>
        <taxon>Pseudomonadati</taxon>
        <taxon>Pseudomonadota</taxon>
        <taxon>Gammaproteobacteria</taxon>
        <taxon>Alteromonadales</taxon>
        <taxon>Shewanellaceae</taxon>
        <taxon>Shewanella</taxon>
    </lineage>
</organism>
<name>HUTU_SHEON</name>
<proteinExistence type="inferred from homology"/>
<dbReference type="EC" id="4.2.1.49" evidence="1"/>
<dbReference type="EMBL" id="AE014299">
    <property type="protein sequence ID" value="AAN53184.1"/>
    <property type="molecule type" value="Genomic_DNA"/>
</dbReference>
<dbReference type="RefSeq" id="NP_715739.1">
    <property type="nucleotide sequence ID" value="NC_004347.2"/>
</dbReference>
<dbReference type="RefSeq" id="WP_011070507.1">
    <property type="nucleotide sequence ID" value="NC_004347.2"/>
</dbReference>
<dbReference type="SMR" id="Q8EKJ5"/>
<dbReference type="STRING" id="211586.SO_0097"/>
<dbReference type="PaxDb" id="211586-SO_0097"/>
<dbReference type="KEGG" id="son:SO_0097"/>
<dbReference type="PATRIC" id="fig|211586.12.peg.97"/>
<dbReference type="eggNOG" id="COG2987">
    <property type="taxonomic scope" value="Bacteria"/>
</dbReference>
<dbReference type="HOGENOM" id="CLU_018868_0_1_6"/>
<dbReference type="OrthoDB" id="9764874at2"/>
<dbReference type="PhylomeDB" id="Q8EKJ5"/>
<dbReference type="BioCyc" id="SONE211586:G1GMP-95-MONOMER"/>
<dbReference type="UniPathway" id="UPA00379">
    <property type="reaction ID" value="UER00550"/>
</dbReference>
<dbReference type="Proteomes" id="UP000008186">
    <property type="component" value="Chromosome"/>
</dbReference>
<dbReference type="GO" id="GO:0005737">
    <property type="term" value="C:cytoplasm"/>
    <property type="evidence" value="ECO:0007669"/>
    <property type="project" value="UniProtKB-SubCell"/>
</dbReference>
<dbReference type="GO" id="GO:0016153">
    <property type="term" value="F:urocanate hydratase activity"/>
    <property type="evidence" value="ECO:0000318"/>
    <property type="project" value="GO_Central"/>
</dbReference>
<dbReference type="GO" id="GO:0006548">
    <property type="term" value="P:L-histidine catabolic process"/>
    <property type="evidence" value="ECO:0000318"/>
    <property type="project" value="GO_Central"/>
</dbReference>
<dbReference type="GO" id="GO:0019556">
    <property type="term" value="P:L-histidine catabolic process to glutamate and formamide"/>
    <property type="evidence" value="ECO:0007669"/>
    <property type="project" value="UniProtKB-UniPathway"/>
</dbReference>
<dbReference type="GO" id="GO:0019557">
    <property type="term" value="P:L-histidine catabolic process to glutamate and formate"/>
    <property type="evidence" value="ECO:0007669"/>
    <property type="project" value="UniProtKB-UniPathway"/>
</dbReference>
<dbReference type="FunFam" id="3.40.50.10730:FF:000001">
    <property type="entry name" value="Urocanate hydratase"/>
    <property type="match status" value="1"/>
</dbReference>
<dbReference type="Gene3D" id="3.40.50.10730">
    <property type="entry name" value="Urocanase like domains"/>
    <property type="match status" value="1"/>
</dbReference>
<dbReference type="Gene3D" id="3.40.1770.10">
    <property type="entry name" value="Urocanase superfamily"/>
    <property type="match status" value="1"/>
</dbReference>
<dbReference type="HAMAP" id="MF_00577">
    <property type="entry name" value="HutU"/>
    <property type="match status" value="1"/>
</dbReference>
<dbReference type="InterPro" id="IPR055351">
    <property type="entry name" value="Urocanase"/>
</dbReference>
<dbReference type="InterPro" id="IPR023637">
    <property type="entry name" value="Urocanase-like"/>
</dbReference>
<dbReference type="InterPro" id="IPR035401">
    <property type="entry name" value="Urocanase_C"/>
</dbReference>
<dbReference type="InterPro" id="IPR038364">
    <property type="entry name" value="Urocanase_central_sf"/>
</dbReference>
<dbReference type="InterPro" id="IPR023636">
    <property type="entry name" value="Urocanase_CS"/>
</dbReference>
<dbReference type="InterPro" id="IPR035400">
    <property type="entry name" value="Urocanase_N"/>
</dbReference>
<dbReference type="InterPro" id="IPR035085">
    <property type="entry name" value="Urocanase_Rossmann-like"/>
</dbReference>
<dbReference type="InterPro" id="IPR036190">
    <property type="entry name" value="Urocanase_sf"/>
</dbReference>
<dbReference type="NCBIfam" id="TIGR01228">
    <property type="entry name" value="hutU"/>
    <property type="match status" value="1"/>
</dbReference>
<dbReference type="NCBIfam" id="NF003820">
    <property type="entry name" value="PRK05414.1"/>
    <property type="match status" value="1"/>
</dbReference>
<dbReference type="PANTHER" id="PTHR12216">
    <property type="entry name" value="UROCANATE HYDRATASE"/>
    <property type="match status" value="1"/>
</dbReference>
<dbReference type="PANTHER" id="PTHR12216:SF4">
    <property type="entry name" value="UROCANATE HYDRATASE"/>
    <property type="match status" value="1"/>
</dbReference>
<dbReference type="Pfam" id="PF01175">
    <property type="entry name" value="Urocanase"/>
    <property type="match status" value="1"/>
</dbReference>
<dbReference type="Pfam" id="PF17392">
    <property type="entry name" value="Urocanase_C"/>
    <property type="match status" value="1"/>
</dbReference>
<dbReference type="Pfam" id="PF17391">
    <property type="entry name" value="Urocanase_N"/>
    <property type="match status" value="1"/>
</dbReference>
<dbReference type="PIRSF" id="PIRSF001423">
    <property type="entry name" value="Urocanate_hydrat"/>
    <property type="match status" value="1"/>
</dbReference>
<dbReference type="SUPFAM" id="SSF111326">
    <property type="entry name" value="Urocanase"/>
    <property type="match status" value="1"/>
</dbReference>
<dbReference type="PROSITE" id="PS01233">
    <property type="entry name" value="UROCANASE"/>
    <property type="match status" value="1"/>
</dbReference>
<accession>Q8EKJ5</accession>
<comment type="function">
    <text evidence="1">Catalyzes the conversion of urocanate to 4-imidazolone-5-propionate.</text>
</comment>
<comment type="catalytic activity">
    <reaction evidence="1">
        <text>4-imidazolone-5-propanoate = trans-urocanate + H2O</text>
        <dbReference type="Rhea" id="RHEA:13101"/>
        <dbReference type="ChEBI" id="CHEBI:15377"/>
        <dbReference type="ChEBI" id="CHEBI:17771"/>
        <dbReference type="ChEBI" id="CHEBI:77893"/>
        <dbReference type="EC" id="4.2.1.49"/>
    </reaction>
</comment>
<comment type="cofactor">
    <cofactor evidence="1">
        <name>NAD(+)</name>
        <dbReference type="ChEBI" id="CHEBI:57540"/>
    </cofactor>
    <text evidence="1">Binds 1 NAD(+) per subunit.</text>
</comment>
<comment type="pathway">
    <text evidence="1">Amino-acid degradation; L-histidine degradation into L-glutamate; N-formimidoyl-L-glutamate from L-histidine: step 2/3.</text>
</comment>
<comment type="subcellular location">
    <subcellularLocation>
        <location evidence="1">Cytoplasm</location>
    </subcellularLocation>
</comment>
<comment type="similarity">
    <text evidence="1">Belongs to the urocanase family.</text>
</comment>
<gene>
    <name evidence="1" type="primary">hutU</name>
    <name type="ordered locus">SO_0097</name>
</gene>
<evidence type="ECO:0000255" key="1">
    <source>
        <dbReference type="HAMAP-Rule" id="MF_00577"/>
    </source>
</evidence>
<keyword id="KW-0963">Cytoplasm</keyword>
<keyword id="KW-0369">Histidine metabolism</keyword>
<keyword id="KW-0456">Lyase</keyword>
<keyword id="KW-0520">NAD</keyword>
<keyword id="KW-1185">Reference proteome</keyword>
<reference key="1">
    <citation type="journal article" date="2002" name="Nat. Biotechnol.">
        <title>Genome sequence of the dissimilatory metal ion-reducing bacterium Shewanella oneidensis.</title>
        <authorList>
            <person name="Heidelberg J.F."/>
            <person name="Paulsen I.T."/>
            <person name="Nelson K.E."/>
            <person name="Gaidos E.J."/>
            <person name="Nelson W.C."/>
            <person name="Read T.D."/>
            <person name="Eisen J.A."/>
            <person name="Seshadri R."/>
            <person name="Ward N.L."/>
            <person name="Methe B.A."/>
            <person name="Clayton R.A."/>
            <person name="Meyer T."/>
            <person name="Tsapin A."/>
            <person name="Scott J."/>
            <person name="Beanan M.J."/>
            <person name="Brinkac L.M."/>
            <person name="Daugherty S.C."/>
            <person name="DeBoy R.T."/>
            <person name="Dodson R.J."/>
            <person name="Durkin A.S."/>
            <person name="Haft D.H."/>
            <person name="Kolonay J.F."/>
            <person name="Madupu R."/>
            <person name="Peterson J.D."/>
            <person name="Umayam L.A."/>
            <person name="White O."/>
            <person name="Wolf A.M."/>
            <person name="Vamathevan J.J."/>
            <person name="Weidman J.F."/>
            <person name="Impraim M."/>
            <person name="Lee K."/>
            <person name="Berry K.J."/>
            <person name="Lee C."/>
            <person name="Mueller J."/>
            <person name="Khouri H.M."/>
            <person name="Gill J."/>
            <person name="Utterback T.R."/>
            <person name="McDonald L.A."/>
            <person name="Feldblyum T.V."/>
            <person name="Smith H.O."/>
            <person name="Venter J.C."/>
            <person name="Nealson K.H."/>
            <person name="Fraser C.M."/>
        </authorList>
    </citation>
    <scope>NUCLEOTIDE SEQUENCE [LARGE SCALE GENOMIC DNA]</scope>
    <source>
        <strain>ATCC 700550 / JCM 31522 / CIP 106686 / LMG 19005 / NCIMB 14063 / MR-1</strain>
    </source>
</reference>
<feature type="chain" id="PRO_0000207352" description="Urocanate hydratase">
    <location>
        <begin position="1"/>
        <end position="556"/>
    </location>
</feature>
<feature type="active site" evidence="1">
    <location>
        <position position="410"/>
    </location>
</feature>
<feature type="binding site" evidence="1">
    <location>
        <begin position="52"/>
        <end position="53"/>
    </location>
    <ligand>
        <name>NAD(+)</name>
        <dbReference type="ChEBI" id="CHEBI:57540"/>
    </ligand>
</feature>
<feature type="binding site" evidence="1">
    <location>
        <position position="130"/>
    </location>
    <ligand>
        <name>NAD(+)</name>
        <dbReference type="ChEBI" id="CHEBI:57540"/>
    </ligand>
</feature>
<feature type="binding site" evidence="1">
    <location>
        <begin position="176"/>
        <end position="178"/>
    </location>
    <ligand>
        <name>NAD(+)</name>
        <dbReference type="ChEBI" id="CHEBI:57540"/>
    </ligand>
</feature>
<feature type="binding site" evidence="1">
    <location>
        <position position="196"/>
    </location>
    <ligand>
        <name>NAD(+)</name>
        <dbReference type="ChEBI" id="CHEBI:57540"/>
    </ligand>
</feature>
<feature type="binding site" evidence="1">
    <location>
        <position position="201"/>
    </location>
    <ligand>
        <name>NAD(+)</name>
        <dbReference type="ChEBI" id="CHEBI:57540"/>
    </ligand>
</feature>
<feature type="binding site" evidence="1">
    <location>
        <begin position="242"/>
        <end position="243"/>
    </location>
    <ligand>
        <name>NAD(+)</name>
        <dbReference type="ChEBI" id="CHEBI:57540"/>
    </ligand>
</feature>
<feature type="binding site" evidence="1">
    <location>
        <begin position="263"/>
        <end position="267"/>
    </location>
    <ligand>
        <name>NAD(+)</name>
        <dbReference type="ChEBI" id="CHEBI:57540"/>
    </ligand>
</feature>
<feature type="binding site" evidence="1">
    <location>
        <begin position="273"/>
        <end position="274"/>
    </location>
    <ligand>
        <name>NAD(+)</name>
        <dbReference type="ChEBI" id="CHEBI:57540"/>
    </ligand>
</feature>
<feature type="binding site" evidence="1">
    <location>
        <position position="322"/>
    </location>
    <ligand>
        <name>NAD(+)</name>
        <dbReference type="ChEBI" id="CHEBI:57540"/>
    </ligand>
</feature>
<feature type="binding site" evidence="1">
    <location>
        <position position="492"/>
    </location>
    <ligand>
        <name>NAD(+)</name>
        <dbReference type="ChEBI" id="CHEBI:57540"/>
    </ligand>
</feature>